<proteinExistence type="inferred from homology"/>
<comment type="function">
    <text evidence="1">Specifically methylates the pseudouridine at position 1915 (m3Psi1915) in 23S rRNA.</text>
</comment>
<comment type="catalytic activity">
    <reaction evidence="1">
        <text>pseudouridine(1915) in 23S rRNA + S-adenosyl-L-methionine = N(3)-methylpseudouridine(1915) in 23S rRNA + S-adenosyl-L-homocysteine + H(+)</text>
        <dbReference type="Rhea" id="RHEA:42752"/>
        <dbReference type="Rhea" id="RHEA-COMP:10221"/>
        <dbReference type="Rhea" id="RHEA-COMP:10222"/>
        <dbReference type="ChEBI" id="CHEBI:15378"/>
        <dbReference type="ChEBI" id="CHEBI:57856"/>
        <dbReference type="ChEBI" id="CHEBI:59789"/>
        <dbReference type="ChEBI" id="CHEBI:65314"/>
        <dbReference type="ChEBI" id="CHEBI:74486"/>
        <dbReference type="EC" id="2.1.1.177"/>
    </reaction>
</comment>
<comment type="subunit">
    <text evidence="1">Homodimer.</text>
</comment>
<comment type="subcellular location">
    <subcellularLocation>
        <location evidence="1">Cytoplasm</location>
    </subcellularLocation>
</comment>
<comment type="similarity">
    <text evidence="1">Belongs to the RNA methyltransferase RlmH family.</text>
</comment>
<feature type="chain" id="PRO_0000366656" description="Ribosomal RNA large subunit methyltransferase H">
    <location>
        <begin position="1"/>
        <end position="156"/>
    </location>
</feature>
<feature type="binding site" evidence="1">
    <location>
        <position position="73"/>
    </location>
    <ligand>
        <name>S-adenosyl-L-methionine</name>
        <dbReference type="ChEBI" id="CHEBI:59789"/>
    </ligand>
</feature>
<feature type="binding site" evidence="1">
    <location>
        <position position="104"/>
    </location>
    <ligand>
        <name>S-adenosyl-L-methionine</name>
        <dbReference type="ChEBI" id="CHEBI:59789"/>
    </ligand>
</feature>
<feature type="binding site" evidence="1">
    <location>
        <begin position="123"/>
        <end position="128"/>
    </location>
    <ligand>
        <name>S-adenosyl-L-methionine</name>
        <dbReference type="ChEBI" id="CHEBI:59789"/>
    </ligand>
</feature>
<organism>
    <name type="scientific">Shewanella woodyi (strain ATCC 51908 / MS32)</name>
    <dbReference type="NCBI Taxonomy" id="392500"/>
    <lineage>
        <taxon>Bacteria</taxon>
        <taxon>Pseudomonadati</taxon>
        <taxon>Pseudomonadota</taxon>
        <taxon>Gammaproteobacteria</taxon>
        <taxon>Alteromonadales</taxon>
        <taxon>Shewanellaceae</taxon>
        <taxon>Shewanella</taxon>
    </lineage>
</organism>
<keyword id="KW-0963">Cytoplasm</keyword>
<keyword id="KW-0489">Methyltransferase</keyword>
<keyword id="KW-1185">Reference proteome</keyword>
<keyword id="KW-0698">rRNA processing</keyword>
<keyword id="KW-0949">S-adenosyl-L-methionine</keyword>
<keyword id="KW-0808">Transferase</keyword>
<reference key="1">
    <citation type="submission" date="2008-02" db="EMBL/GenBank/DDBJ databases">
        <title>Complete sequence of Shewanella woodyi ATCC 51908.</title>
        <authorList>
            <consortium name="US DOE Joint Genome Institute"/>
            <person name="Copeland A."/>
            <person name="Lucas S."/>
            <person name="Lapidus A."/>
            <person name="Glavina del Rio T."/>
            <person name="Dalin E."/>
            <person name="Tice H."/>
            <person name="Bruce D."/>
            <person name="Goodwin L."/>
            <person name="Pitluck S."/>
            <person name="Sims D."/>
            <person name="Brettin T."/>
            <person name="Detter J.C."/>
            <person name="Han C."/>
            <person name="Kuske C.R."/>
            <person name="Schmutz J."/>
            <person name="Larimer F."/>
            <person name="Land M."/>
            <person name="Hauser L."/>
            <person name="Kyrpides N."/>
            <person name="Lykidis A."/>
            <person name="Zhao J.-S."/>
            <person name="Richardson P."/>
        </authorList>
    </citation>
    <scope>NUCLEOTIDE SEQUENCE [LARGE SCALE GENOMIC DNA]</scope>
    <source>
        <strain>ATCC 51908 / MS32</strain>
    </source>
</reference>
<name>RLMH_SHEWM</name>
<dbReference type="EC" id="2.1.1.177" evidence="1"/>
<dbReference type="EMBL" id="CP000961">
    <property type="protein sequence ID" value="ACA87967.1"/>
    <property type="molecule type" value="Genomic_DNA"/>
</dbReference>
<dbReference type="RefSeq" id="WP_012326299.1">
    <property type="nucleotide sequence ID" value="NC_010506.1"/>
</dbReference>
<dbReference type="SMR" id="B1KDW5"/>
<dbReference type="STRING" id="392500.Swoo_3707"/>
<dbReference type="KEGG" id="swd:Swoo_3707"/>
<dbReference type="eggNOG" id="COG1576">
    <property type="taxonomic scope" value="Bacteria"/>
</dbReference>
<dbReference type="HOGENOM" id="CLU_100552_1_0_6"/>
<dbReference type="Proteomes" id="UP000002168">
    <property type="component" value="Chromosome"/>
</dbReference>
<dbReference type="GO" id="GO:0005737">
    <property type="term" value="C:cytoplasm"/>
    <property type="evidence" value="ECO:0007669"/>
    <property type="project" value="UniProtKB-SubCell"/>
</dbReference>
<dbReference type="GO" id="GO:0070038">
    <property type="term" value="F:rRNA (pseudouridine-N3-)-methyltransferase activity"/>
    <property type="evidence" value="ECO:0007669"/>
    <property type="project" value="UniProtKB-UniRule"/>
</dbReference>
<dbReference type="CDD" id="cd18081">
    <property type="entry name" value="RlmH-like"/>
    <property type="match status" value="1"/>
</dbReference>
<dbReference type="Gene3D" id="3.40.1280.10">
    <property type="match status" value="1"/>
</dbReference>
<dbReference type="HAMAP" id="MF_00658">
    <property type="entry name" value="23SrRNA_methyltr_H"/>
    <property type="match status" value="1"/>
</dbReference>
<dbReference type="InterPro" id="IPR029028">
    <property type="entry name" value="Alpha/beta_knot_MTases"/>
</dbReference>
<dbReference type="InterPro" id="IPR003742">
    <property type="entry name" value="RlmH-like"/>
</dbReference>
<dbReference type="InterPro" id="IPR029026">
    <property type="entry name" value="tRNA_m1G_MTases_N"/>
</dbReference>
<dbReference type="NCBIfam" id="NF000984">
    <property type="entry name" value="PRK00103.1-1"/>
    <property type="match status" value="1"/>
</dbReference>
<dbReference type="NCBIfam" id="NF000986">
    <property type="entry name" value="PRK00103.1-4"/>
    <property type="match status" value="1"/>
</dbReference>
<dbReference type="NCBIfam" id="TIGR00246">
    <property type="entry name" value="tRNA_RlmH_YbeA"/>
    <property type="match status" value="1"/>
</dbReference>
<dbReference type="PANTHER" id="PTHR33603">
    <property type="entry name" value="METHYLTRANSFERASE"/>
    <property type="match status" value="1"/>
</dbReference>
<dbReference type="PANTHER" id="PTHR33603:SF1">
    <property type="entry name" value="RIBOSOMAL RNA LARGE SUBUNIT METHYLTRANSFERASE H"/>
    <property type="match status" value="1"/>
</dbReference>
<dbReference type="Pfam" id="PF02590">
    <property type="entry name" value="SPOUT_MTase"/>
    <property type="match status" value="1"/>
</dbReference>
<dbReference type="PIRSF" id="PIRSF004505">
    <property type="entry name" value="MT_bac"/>
    <property type="match status" value="1"/>
</dbReference>
<dbReference type="SUPFAM" id="SSF75217">
    <property type="entry name" value="alpha/beta knot"/>
    <property type="match status" value="1"/>
</dbReference>
<protein>
    <recommendedName>
        <fullName evidence="1">Ribosomal RNA large subunit methyltransferase H</fullName>
        <ecNumber evidence="1">2.1.1.177</ecNumber>
    </recommendedName>
    <alternativeName>
        <fullName evidence="1">23S rRNA (pseudouridine1915-N3)-methyltransferase</fullName>
    </alternativeName>
    <alternativeName>
        <fullName evidence="1">23S rRNA m3Psi1915 methyltransferase</fullName>
    </alternativeName>
    <alternativeName>
        <fullName evidence="1">rRNA (pseudouridine-N3-)-methyltransferase RlmH</fullName>
    </alternativeName>
</protein>
<gene>
    <name evidence="1" type="primary">rlmH</name>
    <name type="ordered locus">Swoo_3707</name>
</gene>
<accession>B1KDW5</accession>
<evidence type="ECO:0000255" key="1">
    <source>
        <dbReference type="HAMAP-Rule" id="MF_00658"/>
    </source>
</evidence>
<sequence length="156" mass="17402">MKIQLVAVGTRMPDWVTTGFKEYQRRFPRDMALELVEIPAGKRGKNADIARILHKEGEQMLAAIPKGNHIVSLDLPGKTWTTPQLATQLSRWQLDGRDVSLLIGGPEGLAPSCKQAASQSWCLSALTLPHPLVRVVVAESLYRAWSVNTNHPYHRE</sequence>